<protein>
    <recommendedName>
        <fullName evidence="1">UPF0114 protein KPK_0696</fullName>
    </recommendedName>
</protein>
<comment type="subcellular location">
    <subcellularLocation>
        <location evidence="1">Cell membrane</location>
        <topology evidence="1">Multi-pass membrane protein</topology>
    </subcellularLocation>
</comment>
<comment type="similarity">
    <text evidence="1">Belongs to the UPF0114 family.</text>
</comment>
<dbReference type="EMBL" id="CP000964">
    <property type="protein sequence ID" value="ACI08832.1"/>
    <property type="molecule type" value="Genomic_DNA"/>
</dbReference>
<dbReference type="KEGG" id="kpe:KPK_0696"/>
<dbReference type="HOGENOM" id="CLU_097887_1_1_6"/>
<dbReference type="BioCyc" id="KPNE507522:GI0B-696-MONOMER"/>
<dbReference type="Proteomes" id="UP000001734">
    <property type="component" value="Chromosome"/>
</dbReference>
<dbReference type="GO" id="GO:0005886">
    <property type="term" value="C:plasma membrane"/>
    <property type="evidence" value="ECO:0007669"/>
    <property type="project" value="UniProtKB-SubCell"/>
</dbReference>
<dbReference type="HAMAP" id="MF_00143">
    <property type="entry name" value="UPF0114"/>
    <property type="match status" value="1"/>
</dbReference>
<dbReference type="InterPro" id="IPR005134">
    <property type="entry name" value="UPF0114"/>
</dbReference>
<dbReference type="InterPro" id="IPR020761">
    <property type="entry name" value="UPF0114_bac"/>
</dbReference>
<dbReference type="NCBIfam" id="TIGR00645">
    <property type="entry name" value="HI0507"/>
    <property type="match status" value="1"/>
</dbReference>
<dbReference type="PANTHER" id="PTHR38596">
    <property type="entry name" value="UPF0114 PROTEIN YQHA"/>
    <property type="match status" value="1"/>
</dbReference>
<dbReference type="PANTHER" id="PTHR38596:SF1">
    <property type="entry name" value="UPF0114 PROTEIN YQHA"/>
    <property type="match status" value="1"/>
</dbReference>
<dbReference type="Pfam" id="PF03350">
    <property type="entry name" value="UPF0114"/>
    <property type="match status" value="1"/>
</dbReference>
<name>Y696_KLEP3</name>
<proteinExistence type="inferred from homology"/>
<sequence length="164" mass="18600">MERFLENAMYTSRWLLAPVYFGLSLGLVALTIKFFQEIVHVLPHIFSVSESELILTLLSLVDMTLVGGLLVMVMFSGYENFVSQLDINEGKEKLSWLGKMDATSLKNKVAASIVAISSIHLLRVFMDAKNVPDNKLMWYVIIHLTFVLSAFVMGYLDRLNKVKH</sequence>
<gene>
    <name type="ordered locus">KPK_0696</name>
</gene>
<keyword id="KW-1003">Cell membrane</keyword>
<keyword id="KW-0472">Membrane</keyword>
<keyword id="KW-0812">Transmembrane</keyword>
<keyword id="KW-1133">Transmembrane helix</keyword>
<reference key="1">
    <citation type="journal article" date="2008" name="PLoS Genet.">
        <title>Complete genome sequence of the N2-fixing broad host range endophyte Klebsiella pneumoniae 342 and virulence predictions verified in mice.</title>
        <authorList>
            <person name="Fouts D.E."/>
            <person name="Tyler H.L."/>
            <person name="DeBoy R.T."/>
            <person name="Daugherty S."/>
            <person name="Ren Q."/>
            <person name="Badger J.H."/>
            <person name="Durkin A.S."/>
            <person name="Huot H."/>
            <person name="Shrivastava S."/>
            <person name="Kothari S."/>
            <person name="Dodson R.J."/>
            <person name="Mohamoud Y."/>
            <person name="Khouri H."/>
            <person name="Roesch L.F.W."/>
            <person name="Krogfelt K.A."/>
            <person name="Struve C."/>
            <person name="Triplett E.W."/>
            <person name="Methe B.A."/>
        </authorList>
    </citation>
    <scope>NUCLEOTIDE SEQUENCE [LARGE SCALE GENOMIC DNA]</scope>
    <source>
        <strain>342</strain>
    </source>
</reference>
<organism>
    <name type="scientific">Klebsiella pneumoniae (strain 342)</name>
    <dbReference type="NCBI Taxonomy" id="507522"/>
    <lineage>
        <taxon>Bacteria</taxon>
        <taxon>Pseudomonadati</taxon>
        <taxon>Pseudomonadota</taxon>
        <taxon>Gammaproteobacteria</taxon>
        <taxon>Enterobacterales</taxon>
        <taxon>Enterobacteriaceae</taxon>
        <taxon>Klebsiella/Raoultella group</taxon>
        <taxon>Klebsiella</taxon>
        <taxon>Klebsiella pneumoniae complex</taxon>
    </lineage>
</organism>
<accession>B5XU71</accession>
<evidence type="ECO:0000255" key="1">
    <source>
        <dbReference type="HAMAP-Rule" id="MF_00143"/>
    </source>
</evidence>
<feature type="chain" id="PRO_1000096270" description="UPF0114 protein KPK_0696">
    <location>
        <begin position="1"/>
        <end position="164"/>
    </location>
</feature>
<feature type="transmembrane region" description="Helical" evidence="1">
    <location>
        <begin position="15"/>
        <end position="35"/>
    </location>
</feature>
<feature type="transmembrane region" description="Helical" evidence="1">
    <location>
        <begin position="53"/>
        <end position="73"/>
    </location>
</feature>
<feature type="transmembrane region" description="Helical" evidence="1">
    <location>
        <begin position="109"/>
        <end position="126"/>
    </location>
</feature>
<feature type="transmembrane region" description="Helical" evidence="1">
    <location>
        <begin position="136"/>
        <end position="156"/>
    </location>
</feature>